<proteinExistence type="predicted"/>
<evidence type="ECO:0000256" key="1">
    <source>
        <dbReference type="SAM" id="MobiDB-lite"/>
    </source>
</evidence>
<evidence type="ECO:0000269" key="2">
    <source>
    </source>
</evidence>
<evidence type="ECO:0000305" key="3"/>
<protein>
    <recommendedName>
        <fullName>uORF protein</fullName>
    </recommendedName>
</protein>
<keyword id="KW-0024">Alternative initiation</keyword>
<keyword id="KW-1035">Host cytoplasm</keyword>
<keyword id="KW-1037">Host cytoskeleton</keyword>
<keyword id="KW-1185">Reference proteome</keyword>
<name>UORF_ZIKV</name>
<organism>
    <name type="scientific">Zika virus</name>
    <name type="common">ZIKV</name>
    <dbReference type="NCBI Taxonomy" id="64320"/>
    <lineage>
        <taxon>Viruses</taxon>
        <taxon>Riboviria</taxon>
        <taxon>Orthornavirae</taxon>
        <taxon>Kitrinoviricota</taxon>
        <taxon>Flasuviricetes</taxon>
        <taxon>Amarillovirales</taxon>
        <taxon>Flaviviridae</taxon>
        <taxon>Orthoflavivirus</taxon>
        <taxon>Orthoflavivirus zikaense</taxon>
    </lineage>
</organism>
<feature type="chain" id="PRO_0000461826" description="uORF protein">
    <location>
        <begin position="1"/>
        <end position="106"/>
    </location>
</feature>
<feature type="region of interest" description="Disordered" evidence="1">
    <location>
        <begin position="1"/>
        <end position="31"/>
    </location>
</feature>
<feature type="compositionally biased region" description="Basic and acidic residues" evidence="1">
    <location>
        <begin position="1"/>
        <end position="19"/>
    </location>
</feature>
<organismHost>
    <name type="scientific">Aedes aegypti</name>
    <name type="common">Yellowfever mosquito</name>
    <name type="synonym">Culex aegypti</name>
    <dbReference type="NCBI Taxonomy" id="7159"/>
</organismHost>
<organismHost>
    <name type="scientific">Aedes albopictus</name>
    <name type="common">Asian tiger mosquito</name>
    <name type="synonym">Stegomyia albopicta</name>
    <dbReference type="NCBI Taxonomy" id="7160"/>
</organismHost>
<organismHost>
    <name type="scientific">Homo sapiens</name>
    <name type="common">Human</name>
    <dbReference type="NCBI Taxonomy" id="9606"/>
</organismHost>
<organismHost>
    <name type="scientific">Macaca mulatta</name>
    <name type="common">Rhesus macaque</name>
    <dbReference type="NCBI Taxonomy" id="9544"/>
</organismHost>
<sequence length="106" mass="12047">MDLETRVSGHEKPQRRNPEDPDCQYAKTRSSPCKPLGRFEEVASRTSAGSWTHQNGFGDTSLFEIYSNQAITGPYQQMGFRGEKRGYGNNKEVQERSCCHVENNQC</sequence>
<dbReference type="EMBL" id="AY632535">
    <property type="status" value="NOT_ANNOTATED_CDS"/>
    <property type="molecule type" value="Genomic_RNA"/>
</dbReference>
<dbReference type="Proteomes" id="UP000054557">
    <property type="component" value="Genome"/>
</dbReference>
<dbReference type="GO" id="GO:0030430">
    <property type="term" value="C:host cell cytoplasm"/>
    <property type="evidence" value="ECO:0007669"/>
    <property type="project" value="UniProtKB-SubCell"/>
</dbReference>
<dbReference type="GO" id="GO:0044163">
    <property type="term" value="C:host cytoskeleton"/>
    <property type="evidence" value="ECO:0007669"/>
    <property type="project" value="UniProtKB-SubCell"/>
</dbReference>
<comment type="function">
    <text evidence="2">Plays a role in viral replication.</text>
</comment>
<comment type="subcellular location">
    <subcellularLocation>
        <location evidence="2">Host cytoplasm</location>
    </subcellularLocation>
    <subcellularLocation>
        <location evidence="2">Host cytoplasm</location>
        <location evidence="2">Host cytoskeleton</location>
    </subcellularLocation>
</comment>
<comment type="alternative products">
    <event type="alternative initiation"/>
    <isoform>
        <id>P0DXN9-1</id>
        <name evidence="2">uORF protein</name>
        <sequence type="displayed"/>
    </isoform>
    <isoform>
        <id>Q32ZE1-1</id>
        <name>Genome polyprotein</name>
        <sequence type="external"/>
    </isoform>
</comment>
<comment type="miscellaneous">
    <text evidence="2">Product of an upstream open reading frame of the genome polyprotein gene.</text>
</comment>
<comment type="miscellaneous">
    <text evidence="2">The initiator methionine is coded by an unusual start codon CTG.</text>
</comment>
<comment type="miscellaneous">
    <text evidence="3">Belongs to the Zika virus African lineage encoding for a single uORF.</text>
</comment>
<reference key="1">
    <citation type="journal article" date="2005" name="Clin. Microbiol. Rev.">
        <title>Biological transmission of arboviruses: reexamination of and new insights into components, mechanisms, and unique traits as well as their evolutionary trends.</title>
        <authorList>
            <person name="Kuno G."/>
            <person name="Chang G.J."/>
        </authorList>
    </citation>
    <scope>NUCLEOTIDE SEQUENCE [GENOMIC RNA]</scope>
    <source>
        <strain>Uganda/MR 766</strain>
    </source>
</reference>
<reference key="2">
    <citation type="journal article" date="2007" name="Arch. Virol.">
        <title>Full-length sequencing and genomic characterization of Bagaza, Kedougou, and Zika viruses.</title>
        <authorList>
            <person name="Kuno G."/>
            <person name="Chang G.J."/>
        </authorList>
    </citation>
    <scope>NUCLEOTIDE SEQUENCE [GENOMIC RNA]</scope>
    <source>
        <strain>Uganda/MR 766</strain>
    </source>
</reference>
<reference key="3">
    <citation type="journal article" date="2024" name="Nat. Commun.">
        <title>Zika viruses encode 5' upstream open reading frames affecting infection of human brain cells.</title>
        <authorList>
            <person name="Lefevre C."/>
            <person name="Cook G.M."/>
            <person name="Dinan A.M."/>
            <person name="Torii S."/>
            <person name="Stewart H."/>
            <person name="Gibbons G."/>
            <person name="Nicholson A.S."/>
            <person name="Echavarria-Consuegra L."/>
            <person name="Meredith L.W."/>
            <person name="Lulla V."/>
            <person name="McGovern N."/>
            <person name="Kenyon J.C."/>
            <person name="Goodfellow I."/>
            <person name="Deane J.E."/>
            <person name="Graham S.C."/>
            <person name="Lakatos A."/>
            <person name="Lambrechts L."/>
            <person name="Brierley I."/>
            <person name="Irigoyen N."/>
        </authorList>
    </citation>
    <scope>ALTERNATIVE INITIATION (ISOFORM UORF)</scope>
    <scope>FUNCTION</scope>
    <scope>SUBCELLULAR LOCATION</scope>
    <source>
        <strain>Isolate Dak84</strain>
    </source>
</reference>
<accession>P0DXN9</accession>